<evidence type="ECO:0000250" key="1">
    <source>
        <dbReference type="UniProtKB" id="A1A5Q0"/>
    </source>
</evidence>
<evidence type="ECO:0000250" key="2">
    <source>
        <dbReference type="UniProtKB" id="Q3UHZ5"/>
    </source>
</evidence>
<evidence type="ECO:0000255" key="3"/>
<evidence type="ECO:0000255" key="4">
    <source>
        <dbReference type="PROSITE-ProRule" id="PRU00406"/>
    </source>
</evidence>
<evidence type="ECO:0000256" key="5">
    <source>
        <dbReference type="SAM" id="MobiDB-lite"/>
    </source>
</evidence>
<evidence type="ECO:0000269" key="6">
    <source>
    </source>
</evidence>
<evidence type="ECO:0000269" key="7">
    <source>
    </source>
</evidence>
<evidence type="ECO:0000269" key="8">
    <source>
    </source>
</evidence>
<evidence type="ECO:0000269" key="9">
    <source>
    </source>
</evidence>
<evidence type="ECO:0000269" key="10">
    <source>
    </source>
</evidence>
<evidence type="ECO:0000269" key="11">
    <source>
    </source>
</evidence>
<evidence type="ECO:0000269" key="12">
    <source>
    </source>
</evidence>
<evidence type="ECO:0000269" key="13">
    <source>
    </source>
</evidence>
<evidence type="ECO:0000269" key="14">
    <source>
    </source>
</evidence>
<evidence type="ECO:0000269" key="15">
    <source>
    </source>
</evidence>
<evidence type="ECO:0000269" key="16">
    <source>
    </source>
</evidence>
<evidence type="ECO:0000303" key="17">
    <source>
    </source>
</evidence>
<evidence type="ECO:0000303" key="18">
    <source>
    </source>
</evidence>
<evidence type="ECO:0000305" key="19"/>
<evidence type="ECO:0007744" key="20">
    <source>
        <dbReference type="PDB" id="4RWT"/>
    </source>
</evidence>
<evidence type="ECO:0007829" key="21">
    <source>
        <dbReference type="PDB" id="4RWT"/>
    </source>
</evidence>
<evidence type="ECO:0007829" key="22">
    <source>
        <dbReference type="PDB" id="6UT2"/>
    </source>
</evidence>
<organism>
    <name type="scientific">Homo sapiens</name>
    <name type="common">Human</name>
    <dbReference type="NCBI Taxonomy" id="9606"/>
    <lineage>
        <taxon>Eukaryota</taxon>
        <taxon>Metazoa</taxon>
        <taxon>Chordata</taxon>
        <taxon>Craniata</taxon>
        <taxon>Vertebrata</taxon>
        <taxon>Euteleostomi</taxon>
        <taxon>Mammalia</taxon>
        <taxon>Eutheria</taxon>
        <taxon>Euarchontoglires</taxon>
        <taxon>Primates</taxon>
        <taxon>Haplorrhini</taxon>
        <taxon>Catarrhini</taxon>
        <taxon>Hominidae</taxon>
        <taxon>Homo</taxon>
    </lineage>
</organism>
<proteinExistence type="evidence at protein level"/>
<protein>
    <recommendedName>
        <fullName>Leiomodin-2</fullName>
    </recommendedName>
    <alternativeName>
        <fullName>Cardiac leiomodin</fullName>
        <shortName>C-LMOD</shortName>
    </alternativeName>
    <alternativeName>
        <fullName evidence="18">Leiomodin</fullName>
    </alternativeName>
</protein>
<reference key="1">
    <citation type="journal article" date="2003" name="Science">
        <title>Human chromosome 7: DNA sequence and biology.</title>
        <authorList>
            <person name="Scherer S.W."/>
            <person name="Cheung J."/>
            <person name="MacDonald J.R."/>
            <person name="Osborne L.R."/>
            <person name="Nakabayashi K."/>
            <person name="Herbrick J.-A."/>
            <person name="Carson A.R."/>
            <person name="Parker-Katiraee L."/>
            <person name="Skaug J."/>
            <person name="Khaja R."/>
            <person name="Zhang J."/>
            <person name="Hudek A.K."/>
            <person name="Li M."/>
            <person name="Haddad M."/>
            <person name="Duggan G.E."/>
            <person name="Fernandez B.A."/>
            <person name="Kanematsu E."/>
            <person name="Gentles S."/>
            <person name="Christopoulos C.C."/>
            <person name="Choufani S."/>
            <person name="Kwasnicka D."/>
            <person name="Zheng X.H."/>
            <person name="Lai Z."/>
            <person name="Nusskern D.R."/>
            <person name="Zhang Q."/>
            <person name="Gu Z."/>
            <person name="Lu F."/>
            <person name="Zeesman S."/>
            <person name="Nowaczyk M.J."/>
            <person name="Teshima I."/>
            <person name="Chitayat D."/>
            <person name="Shuman C."/>
            <person name="Weksberg R."/>
            <person name="Zackai E.H."/>
            <person name="Grebe T.A."/>
            <person name="Cox S.R."/>
            <person name="Kirkpatrick S.J."/>
            <person name="Rahman N."/>
            <person name="Friedman J.M."/>
            <person name="Heng H.H.Q."/>
            <person name="Pelicci P.G."/>
            <person name="Lo-Coco F."/>
            <person name="Belloni E."/>
            <person name="Shaffer L.G."/>
            <person name="Pober B."/>
            <person name="Morton C.C."/>
            <person name="Gusella J.F."/>
            <person name="Bruns G.A.P."/>
            <person name="Korf B.R."/>
            <person name="Quade B.J."/>
            <person name="Ligon A.H."/>
            <person name="Ferguson H."/>
            <person name="Higgins A.W."/>
            <person name="Leach N.T."/>
            <person name="Herrick S.R."/>
            <person name="Lemyre E."/>
            <person name="Farra C.G."/>
            <person name="Kim H.-G."/>
            <person name="Summers A.M."/>
            <person name="Gripp K.W."/>
            <person name="Roberts W."/>
            <person name="Szatmari P."/>
            <person name="Winsor E.J.T."/>
            <person name="Grzeschik K.-H."/>
            <person name="Teebi A."/>
            <person name="Minassian B.A."/>
            <person name="Kere J."/>
            <person name="Armengol L."/>
            <person name="Pujana M.A."/>
            <person name="Estivill X."/>
            <person name="Wilson M.D."/>
            <person name="Koop B.F."/>
            <person name="Tosi S."/>
            <person name="Moore G.E."/>
            <person name="Boright A.P."/>
            <person name="Zlotorynski E."/>
            <person name="Kerem B."/>
            <person name="Kroisel P.M."/>
            <person name="Petek E."/>
            <person name="Oscier D.G."/>
            <person name="Mould S.J."/>
            <person name="Doehner H."/>
            <person name="Doehner K."/>
            <person name="Rommens J.M."/>
            <person name="Vincent J.B."/>
            <person name="Venter J.C."/>
            <person name="Li P.W."/>
            <person name="Mural R.J."/>
            <person name="Adams M.D."/>
            <person name="Tsui L.-C."/>
        </authorList>
    </citation>
    <scope>NUCLEOTIDE SEQUENCE [LARGE SCALE GENOMIC DNA]</scope>
</reference>
<reference key="2">
    <citation type="journal article" date="2004" name="Genome Res.">
        <title>The status, quality, and expansion of the NIH full-length cDNA project: the Mammalian Gene Collection (MGC).</title>
        <authorList>
            <consortium name="The MGC Project Team"/>
        </authorList>
    </citation>
    <scope>NUCLEOTIDE SEQUENCE [LARGE SCALE MRNA] (ISOFORMS 2 AND 3)</scope>
    <source>
        <tissue>Skeletal muscle</tissue>
    </source>
</reference>
<reference key="3">
    <citation type="journal article" date="2001" name="Genomics">
        <title>Leiomodins: larger members of the tropomodulin (Tmod) gene family.</title>
        <authorList>
            <person name="Conley C.A."/>
            <person name="Fritz-Six K.L."/>
            <person name="Almenar-Queralt A."/>
            <person name="Fowler V.M."/>
        </authorList>
    </citation>
    <scope>TISSUE SPECIFICITY</scope>
</reference>
<reference key="4">
    <citation type="journal article" date="2008" name="Science">
        <title>Leiomodin is an actin filament nucleator in muscle cells.</title>
        <authorList>
            <person name="Chereau D."/>
            <person name="Boczkowska M."/>
            <person name="Skwarek-Maruszewska A."/>
            <person name="Fujiwara I."/>
            <person name="Hayes D.B."/>
            <person name="Rebowski G."/>
            <person name="Lappalainen P."/>
            <person name="Pollard T.D."/>
            <person name="Dominguez R."/>
        </authorList>
    </citation>
    <scope>FUNCTION</scope>
    <scope>SUBCELLULAR LOCATION</scope>
    <scope>ACTIN-BINDING</scope>
    <scope>SUBUNIT</scope>
</reference>
<reference key="5">
    <citation type="journal article" date="2014" name="J. Clin. Invest.">
        <title>Leiomodin-3 dysfunction results in thin filament disorganization and nemaline myopathy.</title>
        <authorList>
            <person name="Yuen M."/>
            <person name="Sandaradura S.A."/>
            <person name="Dowling J.J."/>
            <person name="Kostyukova A.S."/>
            <person name="Moroz N."/>
            <person name="Quinlan K.G."/>
            <person name="Lehtokari V.L."/>
            <person name="Ravenscroft G."/>
            <person name="Todd E.J."/>
            <person name="Ceyhan-Birsoy O."/>
            <person name="Gokhin D.S."/>
            <person name="Maluenda J."/>
            <person name="Lek M."/>
            <person name="Nolent F."/>
            <person name="Pappas C.T."/>
            <person name="Novak S.M."/>
            <person name="D'Amico A."/>
            <person name="Malfatti E."/>
            <person name="Thomas B.P."/>
            <person name="Gabriel S.B."/>
            <person name="Gupta N."/>
            <person name="Daly M.J."/>
            <person name="Ilkovski B."/>
            <person name="Houweling P.J."/>
            <person name="Davidson A.E."/>
            <person name="Swanson L.C."/>
            <person name="Brownstein C.A."/>
            <person name="Gupta V.A."/>
            <person name="Medne L."/>
            <person name="Shannon P."/>
            <person name="Martin N."/>
            <person name="Bick D.P."/>
            <person name="Flisberg A."/>
            <person name="Holmberg E."/>
            <person name="Van den Bergh P."/>
            <person name="Lapunzina P."/>
            <person name="Waddell L.B."/>
            <person name="Sloboda D.D."/>
            <person name="Bertini E."/>
            <person name="Chitayat D."/>
            <person name="Telfer W.R."/>
            <person name="Laquerriere A."/>
            <person name="Gregorio C.C."/>
            <person name="Ottenheijm C.A."/>
            <person name="Boennemann C.G."/>
            <person name="Pelin K."/>
            <person name="Beggs A.H."/>
            <person name="Hayashi Y.K."/>
            <person name="Romero N.B."/>
            <person name="Laing N.G."/>
            <person name="Nishino I."/>
            <person name="Wallgren-Pettersson C."/>
            <person name="Melki J."/>
            <person name="Fowler V.M."/>
            <person name="MacArthur D.G."/>
            <person name="North K.N."/>
            <person name="Clarke N.F."/>
        </authorList>
    </citation>
    <scope>FUNCTION</scope>
    <scope>INTERACTION WITH TPM1/2</scope>
    <scope>TISSUE SPECIFICITY</scope>
</reference>
<reference key="6">
    <citation type="journal article" date="2010" name="Mol. Biol. Cell">
        <title>Different localizations and cellular behaviors of leiomodin and tropomodulin in mature cardiomyocyte sarcomeres.</title>
        <authorList>
            <person name="Skwarek-Maruszewska A."/>
            <person name="Boczkowska M."/>
            <person name="Zajac A.L."/>
            <person name="Kremneva E."/>
            <person name="Svitkina T."/>
            <person name="Dominguez R."/>
            <person name="Lappalainen P."/>
        </authorList>
    </citation>
    <scope>SUBCELLULAR LOCATION</scope>
    <scope>ACTIN-BINDING</scope>
</reference>
<reference key="7">
    <citation type="journal article" date="2015" name="Nat. Commun.">
        <title>How Leiomodin and Tropomodulin use a common fold for different actin assembly functions.</title>
        <authorList>
            <person name="Boczkowska M."/>
            <person name="Rebowski G."/>
            <person name="Kremneva E."/>
            <person name="Lappalainen P."/>
            <person name="Dominguez R."/>
        </authorList>
    </citation>
    <scope>FUNCTION</scope>
    <scope>SUBCELLULAR LOCATION</scope>
</reference>
<reference key="8">
    <citation type="journal article" date="2016" name="Biochim. Biophys. Acta">
        <title>Localization of the binding interface between leiomodin-2 and alpha-tropomyosin.</title>
        <authorList>
            <person name="Colpan M."/>
            <person name="Tolkatchev D."/>
            <person name="Grover S."/>
            <person name="Helms G.L."/>
            <person name="Cort J.R."/>
            <person name="Moroz N."/>
            <person name="Kostyukova A.S."/>
        </authorList>
    </citation>
    <scope>INTERACTION WITH TPM1</scope>
</reference>
<reference key="9">
    <citation type="journal article" date="2019" name="Sci. Adv.">
        <title>Disruption of cardiac thin filament assembly arising from a mutation in LMOD2: A novel mechanism of neonatal dilated cardiomyopathy.</title>
        <authorList>
            <person name="Ahrens-Nicklas R.C."/>
            <person name="Pappas C.T."/>
            <person name="Farman G.P."/>
            <person name="Mayfield R.M."/>
            <person name="Larrinaga T.M."/>
            <person name="Medne L."/>
            <person name="Ritter A."/>
            <person name="Krantz I.D."/>
            <person name="Murali C."/>
            <person name="Lin K.Y."/>
            <person name="Berger J.H."/>
            <person name="Yum S.W."/>
            <person name="Carreon C.K."/>
            <person name="Gregorio C.C."/>
        </authorList>
    </citation>
    <scope>INVOLVEMENT IN CMD2G</scope>
    <scope>VARIANT CMD2G 398-TRP--ARG-547 DEL</scope>
    <scope>CHARACTERIZATION OF VARIANT CMD2G 398-TRP--ARG-547 DEL</scope>
</reference>
<reference key="10">
    <citation type="journal article" date="2021" name="CJC Open">
        <title>Early Death of 2 Siblings Related to Mutations in LMOD2, a Recently Discovered Cause of Neonatal Dilated Cardiomyopathy.</title>
        <authorList>
            <person name="Greenway S.C."/>
            <person name="Fruitman D."/>
            <person name="Ferrier R."/>
            <person name="Huculak C."/>
            <person name="Marcadier J."/>
            <person name="Sergi C."/>
            <person name="Bernier F.P."/>
        </authorList>
    </citation>
    <scope>VARIANT CMD2G 513-ARG--ARG-547 DEL</scope>
</reference>
<reference key="11">
    <citation type="journal article" date="2022" name="Am. J. Med. Genet. A">
        <title>LMOD2-related dilated cardiomyopathy presenting in late infancy.</title>
        <authorList>
            <person name="Lay E."/>
            <person name="Azamian M.S."/>
            <person name="Denfield S.W."/>
            <person name="Dreyer W."/>
            <person name="Spinner J.A."/>
            <person name="Kearney D."/>
            <person name="Zhang L."/>
            <person name="Worley K.C."/>
            <person name="Bi W."/>
            <person name="Lalani S.R."/>
        </authorList>
    </citation>
    <scope>INVOLVEMENT IN CMD2G</scope>
</reference>
<reference key="12">
    <citation type="journal article" date="2022" name="Eur. J. Hum. Genet.">
        <title>Neonatal-lethal dilated cardiomyopathy due to a homozygous LMOD2 donor splice-site variant.</title>
        <authorList>
            <person name="Yuen M."/>
            <person name="Worgan L."/>
            <person name="Iwanski J."/>
            <person name="Pappas C.T."/>
            <person name="Joshi H."/>
            <person name="Churko J.M."/>
            <person name="Arbuckle S."/>
            <person name="Kirk E.P."/>
            <person name="Zhu Y."/>
            <person name="Roscioli T."/>
            <person name="Gregorio C.C."/>
            <person name="Cooper S.T."/>
        </authorList>
    </citation>
    <scope>INVOLVEMENT IN CMD2G</scope>
</reference>
<reference evidence="20" key="13">
    <citation type="journal article" date="2015" name="Proc. Natl. Acad. Sci. U.S.A.">
        <title>Mechanisms of leiomodin 2-mediated regulation of actin filament in muscle cells.</title>
        <authorList>
            <person name="Chen X."/>
            <person name="Ni F."/>
            <person name="Kondrashkina E."/>
            <person name="Ma J."/>
            <person name="Wang Q."/>
        </authorList>
    </citation>
    <scope>X-RAY CRYSTALLOGRAPHY (2.98 ANGSTROMS) OF 1-547 IN COMPLEX WITH ACTIN</scope>
    <scope>FUNCTION</scope>
    <scope>ACTIN-BINDING</scope>
    <scope>SUBUNIT</scope>
    <scope>MUTAGENESIS OF PHE-64; LEU-69; 72-TYR-TRP-73; GLY-284; HIS-304; HIS-334; ARG-356; 525-LEU--ILE-529 AND 537-LEU--VAL-540</scope>
</reference>
<gene>
    <name type="primary">LMOD2</name>
</gene>
<name>LMOD2_HUMAN</name>
<sequence length="547" mass="61675">MSTFGYRRGLSKYESIDEDELLASLSAEELKELERELEDIEPDRNLPVGLRQKSLTEKTPTGTFSREALMAYWEKESQKLLEKERLGECGKVAEDKEESEEELIFTESNSEVSEEVYTEEEEEESQEEEEEEDSDEEERTIETAKGINGTVNYDSVNSDNSKPKIFKSQIENINLTNGSNGRNTESPAAIHPCGNPTVIEDALDKIKSNDPDTTEVNLNNIENITTQTLTRFAEALKDNTVVKTFSLANTHADDSAAMAIAEMLKVNEHITNVNVESNFITGKGILAIMRALQHNTVLTELRFHNQRHIMGSQVEMEIVKLLKENTTLLRLGYHFELPGPRMSMTSILTRNMDKQRQKRLQEQKQQEGYDGGPNLRTKVWQRGTPSSSPYVSPRHSPWSSPKLPKKVQTVRSRPLSPVATPPPPPPPPPPPPPSSQRLPPPPPPPPPPLPEKKLITRNIAEVIKQQESAQRALQNGQKKKKGKKVKKQPNSILKEIKNSLRSVQEKKMEDSSRPSTPQRSAHENLMEAIRGSSIKQLKRVEVPEALR</sequence>
<feature type="chain" id="PRO_0000311340" description="Leiomodin-2">
    <location>
        <begin position="1"/>
        <end position="547"/>
    </location>
</feature>
<feature type="domain" description="WH2" evidence="4">
    <location>
        <begin position="521"/>
        <end position="540"/>
    </location>
</feature>
<feature type="region of interest" description="Interaction with actin 1" evidence="11">
    <location>
        <begin position="1"/>
        <end position="161"/>
    </location>
</feature>
<feature type="region of interest" description="Interaction with tropomyosin alpha" evidence="9">
    <location>
        <begin position="1"/>
        <end position="47"/>
    </location>
</feature>
<feature type="region of interest" description="Disordered" evidence="5">
    <location>
        <begin position="91"/>
        <end position="162"/>
    </location>
</feature>
<feature type="region of interest" description="Interaction with actin 2" evidence="11">
    <location>
        <begin position="162"/>
        <end position="497"/>
    </location>
</feature>
<feature type="region of interest" description="Disordered" evidence="5">
    <location>
        <begin position="352"/>
        <end position="533"/>
    </location>
</feature>
<feature type="region of interest" description="Interaction with actin 3" evidence="11">
    <location>
        <begin position="521"/>
        <end position="540"/>
    </location>
</feature>
<feature type="coiled-coil region" evidence="3">
    <location>
        <begin position="16"/>
        <end position="41"/>
    </location>
</feature>
<feature type="coiled-coil region" evidence="3">
    <location>
        <begin position="113"/>
        <end position="148"/>
    </location>
</feature>
<feature type="compositionally biased region" description="Acidic residues" evidence="5">
    <location>
        <begin position="95"/>
        <end position="104"/>
    </location>
</feature>
<feature type="compositionally biased region" description="Acidic residues" evidence="5">
    <location>
        <begin position="112"/>
        <end position="139"/>
    </location>
</feature>
<feature type="compositionally biased region" description="Polar residues" evidence="5">
    <location>
        <begin position="149"/>
        <end position="160"/>
    </location>
</feature>
<feature type="compositionally biased region" description="Basic and acidic residues" evidence="5">
    <location>
        <begin position="352"/>
        <end position="367"/>
    </location>
</feature>
<feature type="compositionally biased region" description="Pro residues" evidence="5">
    <location>
        <begin position="419"/>
        <end position="449"/>
    </location>
</feature>
<feature type="compositionally biased region" description="Polar residues" evidence="5">
    <location>
        <begin position="465"/>
        <end position="475"/>
    </location>
</feature>
<feature type="compositionally biased region" description="Basic residues" evidence="5">
    <location>
        <begin position="477"/>
        <end position="487"/>
    </location>
</feature>
<feature type="compositionally biased region" description="Basic and acidic residues" evidence="5">
    <location>
        <begin position="494"/>
        <end position="512"/>
    </location>
</feature>
<feature type="modified residue" description="Phosphoserine" evidence="2">
    <location>
        <position position="11"/>
    </location>
</feature>
<feature type="modified residue" description="Phosphoserine" evidence="2">
    <location>
        <position position="15"/>
    </location>
</feature>
<feature type="modified residue" description="Phosphoserine" evidence="1">
    <location>
        <position position="24"/>
    </location>
</feature>
<feature type="modified residue" description="Phosphoserine" evidence="1">
    <location>
        <position position="400"/>
    </location>
</feature>
<feature type="splice variant" id="VSP_029525" description="In isoform 3." evidence="17">
    <original>QKLLEKERLGECGKVAEDKEESEEELIFTESNSEVSEEVYTEEEEEESQEEE</original>
    <variation>LLLLPLLHSQRKSSLPETLQKSSNNRRVPNGHYKMDKKRKKGKRSRNSQTVF</variation>
    <location>
        <begin position="78"/>
        <end position="129"/>
    </location>
</feature>
<feature type="splice variant" id="VSP_029526" description="In isoform 2." evidence="17">
    <original>SEVSEEVYTEEEEEESQEEEEEEDSDEEE</original>
    <variation>RRSPRRKRRKKTVTKRKEQLKLQKGLMEL</variation>
    <location>
        <begin position="110"/>
        <end position="138"/>
    </location>
</feature>
<feature type="splice variant" id="VSP_029527" description="In isoform 3." evidence="17">
    <location>
        <begin position="130"/>
        <end position="547"/>
    </location>
</feature>
<feature type="splice variant" id="VSP_029528" description="In isoform 2." evidence="17">
    <location>
        <begin position="139"/>
        <end position="547"/>
    </location>
</feature>
<feature type="sequence variant" id="VAR_087458" description="In CMD2G; no protein detected by Western blot in cardiac tissue from a homozygous patient." evidence="13">
    <location>
        <begin position="398"/>
        <end position="547"/>
    </location>
</feature>
<feature type="sequence variant" id="VAR_087459" description="In CMD2G." evidence="14">
    <location>
        <begin position="513"/>
        <end position="547"/>
    </location>
</feature>
<feature type="mutagenesis site" description="Mildly impaired activity in promoting actin polymerization; when associated with D-69." evidence="11">
    <original>F</original>
    <variation>D</variation>
    <location>
        <position position="64"/>
    </location>
</feature>
<feature type="mutagenesis site" description="Mildly impaired activity in promoting actin polymerization; when associated with D-64." evidence="11">
    <original>L</original>
    <variation>D</variation>
    <location>
        <position position="69"/>
    </location>
</feature>
<feature type="mutagenesis site" description="Mildly impaired activity in promoting actin polymerization." evidence="11">
    <original>YW</original>
    <variation>DD</variation>
    <location>
        <begin position="72"/>
        <end position="73"/>
    </location>
</feature>
<feature type="mutagenesis site" description="Strongly impaired activity in promoting actin polymerization." evidence="11">
    <original>G</original>
    <variation>R</variation>
    <location>
        <position position="284"/>
    </location>
</feature>
<feature type="mutagenesis site" description="Strongly impaired activity in promoting actin polymerization; when associated with G-334 and A-356." evidence="11">
    <original>H</original>
    <variation>G</variation>
    <location>
        <position position="304"/>
    </location>
</feature>
<feature type="mutagenesis site" description="Strongly impaired activity in promoting actin polymerization; when associated with G-304 and A-356." evidence="11">
    <original>H</original>
    <variation>G</variation>
    <location>
        <position position="334"/>
    </location>
</feature>
<feature type="mutagenesis site" description="Strongly impaired activity in promoting actin polymerization; when associated with G-304 and G-334." evidence="11">
    <original>R</original>
    <variation>A</variation>
    <location>
        <position position="356"/>
    </location>
</feature>
<feature type="mutagenesis site" description="Strongly impaired activity in promoting actin polymerization." evidence="11">
    <original>LMEAI</original>
    <variation>AAEAA</variation>
    <location>
        <begin position="525"/>
        <end position="529"/>
    </location>
</feature>
<feature type="mutagenesis site" description="Strongly impaired activity in promoting actin polymerization." evidence="11">
    <original>LKRV</original>
    <variation>AEEA</variation>
    <location>
        <begin position="537"/>
        <end position="540"/>
    </location>
</feature>
<feature type="helix" evidence="22">
    <location>
        <begin position="3"/>
        <end position="6"/>
    </location>
</feature>
<feature type="turn" evidence="22">
    <location>
        <begin position="7"/>
        <end position="9"/>
    </location>
</feature>
<feature type="turn" evidence="22">
    <location>
        <begin position="12"/>
        <end position="15"/>
    </location>
</feature>
<feature type="helix" evidence="22">
    <location>
        <begin position="18"/>
        <end position="21"/>
    </location>
</feature>
<feature type="turn" evidence="22">
    <location>
        <begin position="22"/>
        <end position="24"/>
    </location>
</feature>
<feature type="helix" evidence="22">
    <location>
        <begin position="27"/>
        <end position="40"/>
    </location>
</feature>
<feature type="helix" evidence="21">
    <location>
        <begin position="199"/>
        <end position="208"/>
    </location>
</feature>
<feature type="strand" evidence="21">
    <location>
        <begin position="215"/>
        <end position="217"/>
    </location>
</feature>
<feature type="helix" evidence="21">
    <location>
        <begin position="226"/>
        <end position="235"/>
    </location>
</feature>
<feature type="turn" evidence="21">
    <location>
        <begin position="236"/>
        <end position="238"/>
    </location>
</feature>
<feature type="strand" evidence="21">
    <location>
        <begin position="243"/>
        <end position="250"/>
    </location>
</feature>
<feature type="helix" evidence="21">
    <location>
        <begin position="254"/>
        <end position="264"/>
    </location>
</feature>
<feature type="strand" evidence="21">
    <location>
        <begin position="272"/>
        <end position="278"/>
    </location>
</feature>
<feature type="helix" evidence="21">
    <location>
        <begin position="282"/>
        <end position="291"/>
    </location>
</feature>
<feature type="helix" evidence="21">
    <location>
        <begin position="292"/>
        <end position="294"/>
    </location>
</feature>
<feature type="strand" evidence="21">
    <location>
        <begin position="300"/>
        <end position="302"/>
    </location>
</feature>
<feature type="helix" evidence="21">
    <location>
        <begin position="313"/>
        <end position="321"/>
    </location>
</feature>
<feature type="helix" evidence="21">
    <location>
        <begin position="322"/>
        <end position="324"/>
    </location>
</feature>
<feature type="strand" evidence="21">
    <location>
        <begin position="330"/>
        <end position="332"/>
    </location>
</feature>
<feature type="helix" evidence="21">
    <location>
        <begin position="338"/>
        <end position="362"/>
    </location>
</feature>
<feature type="helix" evidence="21">
    <location>
        <begin position="460"/>
        <end position="468"/>
    </location>
</feature>
<feature type="helix" evidence="21">
    <location>
        <begin position="490"/>
        <end position="493"/>
    </location>
</feature>
<feature type="helix" evidence="21">
    <location>
        <begin position="495"/>
        <end position="497"/>
    </location>
</feature>
<feature type="strand" evidence="21">
    <location>
        <begin position="502"/>
        <end position="504"/>
    </location>
</feature>
<feature type="helix" evidence="21">
    <location>
        <begin position="520"/>
        <end position="530"/>
    </location>
</feature>
<feature type="helix" evidence="21">
    <location>
        <begin position="534"/>
        <end position="536"/>
    </location>
</feature>
<accession>Q6P5Q4</accession>
<accession>A4D0W9</accession>
<accession>A4D0Y2</accession>
<accession>Q8WVJ8</accession>
<dbReference type="EMBL" id="CH236947">
    <property type="protein sequence ID" value="EAL24334.1"/>
    <property type="status" value="ALT_SEQ"/>
    <property type="molecule type" value="Genomic_DNA"/>
</dbReference>
<dbReference type="EMBL" id="CH236947">
    <property type="protein sequence ID" value="EAL24335.1"/>
    <property type="status" value="ALT_SEQ"/>
    <property type="molecule type" value="Genomic_DNA"/>
</dbReference>
<dbReference type="EMBL" id="BC017911">
    <property type="protein sequence ID" value="AAH17911.1"/>
    <property type="status" value="ALT_INIT"/>
    <property type="molecule type" value="mRNA"/>
</dbReference>
<dbReference type="EMBL" id="BC062765">
    <property type="protein sequence ID" value="AAH62765.1"/>
    <property type="status" value="ALT_SEQ"/>
    <property type="molecule type" value="mRNA"/>
</dbReference>
<dbReference type="CCDS" id="CCDS47693.1">
    <molecule id="Q6P5Q4-1"/>
</dbReference>
<dbReference type="RefSeq" id="NP_997046.1">
    <molecule id="Q6P5Q4-1"/>
    <property type="nucleotide sequence ID" value="NM_207163.3"/>
</dbReference>
<dbReference type="PDB" id="4RWT">
    <property type="method" value="X-ray"/>
    <property type="resolution" value="2.98 A"/>
    <property type="chains" value="C/D=1-547"/>
</dbReference>
<dbReference type="PDB" id="5WFN">
    <property type="method" value="X-ray"/>
    <property type="resolution" value="3.00 A"/>
    <property type="chains" value="C/D=1-547"/>
</dbReference>
<dbReference type="PDB" id="6UT2">
    <property type="method" value="NMR"/>
    <property type="chains" value="A=2-41"/>
</dbReference>
<dbReference type="PDBsum" id="4RWT"/>
<dbReference type="PDBsum" id="5WFN"/>
<dbReference type="PDBsum" id="6UT2"/>
<dbReference type="SMR" id="Q6P5Q4"/>
<dbReference type="BioGRID" id="138540">
    <property type="interactions" value="2"/>
</dbReference>
<dbReference type="FunCoup" id="Q6P5Q4">
    <property type="interactions" value="8"/>
</dbReference>
<dbReference type="IntAct" id="Q6P5Q4">
    <property type="interactions" value="1"/>
</dbReference>
<dbReference type="MINT" id="Q6P5Q4"/>
<dbReference type="STRING" id="9606.ENSP00000411932"/>
<dbReference type="GlyCosmos" id="Q6P5Q4">
    <property type="glycosylation" value="1 site, 1 glycan"/>
</dbReference>
<dbReference type="GlyGen" id="Q6P5Q4">
    <property type="glycosylation" value="3 sites, 1 O-linked glycan (2 sites)"/>
</dbReference>
<dbReference type="iPTMnet" id="Q6P5Q4"/>
<dbReference type="PhosphoSitePlus" id="Q6P5Q4"/>
<dbReference type="BioMuta" id="LMOD2"/>
<dbReference type="DMDM" id="160395556"/>
<dbReference type="jPOST" id="Q6P5Q4"/>
<dbReference type="MassIVE" id="Q6P5Q4"/>
<dbReference type="PaxDb" id="9606-ENSP00000411932"/>
<dbReference type="PeptideAtlas" id="Q6P5Q4"/>
<dbReference type="ProteomicsDB" id="66999">
    <molecule id="Q6P5Q4-1"/>
</dbReference>
<dbReference type="ProteomicsDB" id="67000">
    <molecule id="Q6P5Q4-2"/>
</dbReference>
<dbReference type="ProteomicsDB" id="67001">
    <molecule id="Q6P5Q4-3"/>
</dbReference>
<dbReference type="Antibodypedia" id="55328">
    <property type="antibodies" value="60 antibodies from 13 providers"/>
</dbReference>
<dbReference type="Ensembl" id="ENST00000458573.3">
    <molecule id="Q6P5Q4-1"/>
    <property type="protein sequence ID" value="ENSP00000411932.2"/>
    <property type="gene ID" value="ENSG00000170807.12"/>
</dbReference>
<dbReference type="GeneID" id="442721"/>
<dbReference type="KEGG" id="hsa:442721"/>
<dbReference type="MANE-Select" id="ENST00000458573.3">
    <property type="protein sequence ID" value="ENSP00000411932.2"/>
    <property type="RefSeq nucleotide sequence ID" value="NM_207163.3"/>
    <property type="RefSeq protein sequence ID" value="NP_997046.1"/>
</dbReference>
<dbReference type="UCSC" id="uc003vky.3">
    <molecule id="Q6P5Q4-1"/>
    <property type="organism name" value="human"/>
</dbReference>
<dbReference type="AGR" id="HGNC:6648"/>
<dbReference type="CTD" id="442721"/>
<dbReference type="DisGeNET" id="442721"/>
<dbReference type="GeneCards" id="LMOD2"/>
<dbReference type="HGNC" id="HGNC:6648">
    <property type="gene designation" value="LMOD2"/>
</dbReference>
<dbReference type="HPA" id="ENSG00000170807">
    <property type="expression patterns" value="Group enriched (heart muscle, skeletal muscle, tongue)"/>
</dbReference>
<dbReference type="MalaCards" id="LMOD2"/>
<dbReference type="MIM" id="608006">
    <property type="type" value="gene"/>
</dbReference>
<dbReference type="MIM" id="619897">
    <property type="type" value="phenotype"/>
</dbReference>
<dbReference type="neXtProt" id="NX_Q6P5Q4"/>
<dbReference type="OpenTargets" id="ENSG00000170807"/>
<dbReference type="Orphanet" id="154">
    <property type="disease" value="Familial isolated dilated cardiomyopathy"/>
</dbReference>
<dbReference type="PharmGKB" id="PA30414"/>
<dbReference type="VEuPathDB" id="HostDB:ENSG00000170807"/>
<dbReference type="eggNOG" id="KOG3735">
    <property type="taxonomic scope" value="Eukaryota"/>
</dbReference>
<dbReference type="GeneTree" id="ENSGT00940000156567"/>
<dbReference type="HOGENOM" id="CLU_031052_4_0_1"/>
<dbReference type="InParanoid" id="Q6P5Q4"/>
<dbReference type="OMA" id="EECFTES"/>
<dbReference type="OrthoDB" id="2163268at2759"/>
<dbReference type="PAN-GO" id="Q6P5Q4">
    <property type="GO annotations" value="7 GO annotations based on evolutionary models"/>
</dbReference>
<dbReference type="PhylomeDB" id="Q6P5Q4"/>
<dbReference type="TreeFam" id="TF315841"/>
<dbReference type="PathwayCommons" id="Q6P5Q4"/>
<dbReference type="SignaLink" id="Q6P5Q4"/>
<dbReference type="BioGRID-ORCS" id="442721">
    <property type="hits" value="15 hits in 1153 CRISPR screens"/>
</dbReference>
<dbReference type="ChiTaRS" id="LMOD2">
    <property type="organism name" value="human"/>
</dbReference>
<dbReference type="EvolutionaryTrace" id="Q6P5Q4"/>
<dbReference type="GenomeRNAi" id="442721"/>
<dbReference type="Pharos" id="Q6P5Q4">
    <property type="development level" value="Tbio"/>
</dbReference>
<dbReference type="PRO" id="PR:Q6P5Q4"/>
<dbReference type="Proteomes" id="UP000005640">
    <property type="component" value="Chromosome 7"/>
</dbReference>
<dbReference type="RNAct" id="Q6P5Q4">
    <property type="molecule type" value="protein"/>
</dbReference>
<dbReference type="Bgee" id="ENSG00000170807">
    <property type="expression patterns" value="Expressed in left ventricle myocardium and 99 other cell types or tissues"/>
</dbReference>
<dbReference type="ExpressionAtlas" id="Q6P5Q4">
    <property type="expression patterns" value="baseline and differential"/>
</dbReference>
<dbReference type="GO" id="GO:0005884">
    <property type="term" value="C:actin filament"/>
    <property type="evidence" value="ECO:0000314"/>
    <property type="project" value="UniProtKB"/>
</dbReference>
<dbReference type="GO" id="GO:0005856">
    <property type="term" value="C:cytoskeleton"/>
    <property type="evidence" value="ECO:0000318"/>
    <property type="project" value="GO_Central"/>
</dbReference>
<dbReference type="GO" id="GO:0031430">
    <property type="term" value="C:M band"/>
    <property type="evidence" value="ECO:0007669"/>
    <property type="project" value="UniProtKB-SubCell"/>
</dbReference>
<dbReference type="GO" id="GO:0030016">
    <property type="term" value="C:myofibril"/>
    <property type="evidence" value="ECO:0000314"/>
    <property type="project" value="UniProtKB"/>
</dbReference>
<dbReference type="GO" id="GO:0030017">
    <property type="term" value="C:sarcomere"/>
    <property type="evidence" value="ECO:0000314"/>
    <property type="project" value="UniProtKB"/>
</dbReference>
<dbReference type="GO" id="GO:0005865">
    <property type="term" value="C:striated muscle thin filament"/>
    <property type="evidence" value="ECO:0000318"/>
    <property type="project" value="GO_Central"/>
</dbReference>
<dbReference type="GO" id="GO:0003779">
    <property type="term" value="F:actin binding"/>
    <property type="evidence" value="ECO:0000314"/>
    <property type="project" value="UniProtKB"/>
</dbReference>
<dbReference type="GO" id="GO:0003785">
    <property type="term" value="F:actin monomer binding"/>
    <property type="evidence" value="ECO:0000315"/>
    <property type="project" value="UniProtKB"/>
</dbReference>
<dbReference type="GO" id="GO:0005523">
    <property type="term" value="F:tropomyosin binding"/>
    <property type="evidence" value="ECO:0000315"/>
    <property type="project" value="UniProtKB"/>
</dbReference>
<dbReference type="GO" id="GO:0007015">
    <property type="term" value="P:actin filament organization"/>
    <property type="evidence" value="ECO:0000318"/>
    <property type="project" value="GO_Central"/>
</dbReference>
<dbReference type="GO" id="GO:0030041">
    <property type="term" value="P:actin filament polymerization"/>
    <property type="evidence" value="ECO:0007669"/>
    <property type="project" value="Ensembl"/>
</dbReference>
<dbReference type="GO" id="GO:0045010">
    <property type="term" value="P:actin nucleation"/>
    <property type="evidence" value="ECO:0000314"/>
    <property type="project" value="UniProtKB"/>
</dbReference>
<dbReference type="GO" id="GO:0006936">
    <property type="term" value="P:muscle contraction"/>
    <property type="evidence" value="ECO:0000318"/>
    <property type="project" value="GO_Central"/>
</dbReference>
<dbReference type="GO" id="GO:0030239">
    <property type="term" value="P:myofibril assembly"/>
    <property type="evidence" value="ECO:0000318"/>
    <property type="project" value="GO_Central"/>
</dbReference>
<dbReference type="GO" id="GO:0051694">
    <property type="term" value="P:pointed-end actin filament capping"/>
    <property type="evidence" value="ECO:0007669"/>
    <property type="project" value="InterPro"/>
</dbReference>
<dbReference type="GO" id="GO:0030838">
    <property type="term" value="P:positive regulation of actin filament polymerization"/>
    <property type="evidence" value="ECO:0000314"/>
    <property type="project" value="UniProtKB"/>
</dbReference>
<dbReference type="GO" id="GO:0045214">
    <property type="term" value="P:sarcomere organization"/>
    <property type="evidence" value="ECO:0000315"/>
    <property type="project" value="UniProtKB"/>
</dbReference>
<dbReference type="FunFam" id="3.80.10.10:FF:000132">
    <property type="entry name" value="Leiomodin 2"/>
    <property type="match status" value="1"/>
</dbReference>
<dbReference type="Gene3D" id="3.80.10.10">
    <property type="entry name" value="Ribonuclease Inhibitor"/>
    <property type="match status" value="2"/>
</dbReference>
<dbReference type="InterPro" id="IPR032675">
    <property type="entry name" value="LRR_dom_sf"/>
</dbReference>
<dbReference type="InterPro" id="IPR004934">
    <property type="entry name" value="TMOD"/>
</dbReference>
<dbReference type="InterPro" id="IPR003124">
    <property type="entry name" value="WH2_dom"/>
</dbReference>
<dbReference type="PANTHER" id="PTHR10901:SF12">
    <property type="entry name" value="LEIOMODIN-2"/>
    <property type="match status" value="1"/>
</dbReference>
<dbReference type="PANTHER" id="PTHR10901">
    <property type="entry name" value="TROPOMODULIN"/>
    <property type="match status" value="1"/>
</dbReference>
<dbReference type="Pfam" id="PF03250">
    <property type="entry name" value="Tropomodulin"/>
    <property type="match status" value="1"/>
</dbReference>
<dbReference type="SUPFAM" id="SSF52047">
    <property type="entry name" value="RNI-like"/>
    <property type="match status" value="1"/>
</dbReference>
<dbReference type="PROSITE" id="PS51082">
    <property type="entry name" value="WH2"/>
    <property type="match status" value="1"/>
</dbReference>
<comment type="function">
    <text evidence="2 7 9 10 11">Mediates nucleation of actin filaments and thereby promotes actin polymerization (PubMed:18403713, PubMed:25250574, PubMed:26370058, PubMed:26417072). Plays a role in the regulation of actin filament length (By similarity). Required for normal sarcomere organization in the heart, and for normal heart function (PubMed:18403713).</text>
</comment>
<comment type="subunit">
    <text evidence="2 7 9 11 12">Can bind at least three actin monomers and thereby provides a nucleus for actin filament formation (PubMed:18403713, PubMed:26417072). Interacts (via N-terminus) with tropomyosin alpha (TPM1) (via N-terminus) (PubMed:25250574, PubMed:26873245). May also interact with TPM2 (via N-terminus) (PubMed:25250574). Interacts with FLII (By similarity).</text>
</comment>
<comment type="subcellular location">
    <subcellularLocation>
        <location evidence="7 8 10">Cytoplasm</location>
        <location evidence="7 8 10">Myofibril</location>
        <location evidence="7 8 10">Sarcomere</location>
    </subcellularLocation>
    <subcellularLocation>
        <location evidence="8">Cytoplasm</location>
        <location evidence="8">Myofibril</location>
    </subcellularLocation>
    <subcellularLocation>
        <location evidence="7 8">Cytoplasm</location>
        <location evidence="7 8">Myofibril</location>
        <location evidence="7 8">Sarcomere</location>
        <location evidence="7 8">M line</location>
    </subcellularLocation>
    <subcellularLocation>
        <location evidence="10">Cytoplasm</location>
        <location evidence="10">Cytoskeleton</location>
    </subcellularLocation>
    <text evidence="7 8 10">Colocalizes with actin filaments in sarcomeres. Detected close to the M line.</text>
</comment>
<comment type="alternative products">
    <event type="alternative splicing"/>
    <isoform>
        <id>Q6P5Q4-1</id>
        <name>1</name>
        <sequence type="displayed"/>
    </isoform>
    <isoform>
        <id>Q6P5Q4-2</id>
        <name>2</name>
        <sequence type="described" ref="VSP_029526 VSP_029528"/>
    </isoform>
    <isoform>
        <id>Q6P5Q4-3</id>
        <name>3</name>
        <sequence type="described" ref="VSP_029525 VSP_029527"/>
    </isoform>
</comment>
<comment type="tissue specificity">
    <text evidence="6 9">Specifically expressed in heart and skeletal muscles, with higher levels in heart (at protein level). Not expressed in other tissues.</text>
</comment>
<comment type="disease" evidence="13 14 15 16">
    <disease id="DI-06435">
        <name>Cardiomyopathy, dilated, 2G</name>
        <acronym>CMD2G</acronym>
        <description>A form of dilated cardiomyopathy, a disorder characterized by ventricular dilation and impaired systolic function, resulting in congestive heart failure and arrhythmia. Patients are at risk of premature death. CMD2G is an autosomal recessive form characterized by early-onset, severe cardiomyopathy that progresses rapidly to heart failure in the neonatal period without evidence of intervening hypertrophy.</description>
        <dbReference type="MIM" id="619897"/>
    </disease>
    <text>The disease is caused by variants affecting the gene represented in this entry.</text>
</comment>
<comment type="similarity">
    <text evidence="19">Belongs to the tropomodulin family.</text>
</comment>
<comment type="sequence caution" evidence="19">
    <conflict type="erroneous initiation">
        <sequence resource="EMBL-CDS" id="AAH17911"/>
    </conflict>
</comment>
<comment type="sequence caution" evidence="19">
    <conflict type="erroneous initiation">
        <sequence resource="EMBL-CDS" id="AAH62765"/>
    </conflict>
    <text>Extended N-terminus.</text>
</comment>
<comment type="sequence caution" evidence="19">
    <conflict type="frameshift">
        <sequence resource="EMBL-CDS" id="AAH62765"/>
    </conflict>
</comment>
<comment type="sequence caution" evidence="19">
    <conflict type="erroneous gene model prediction">
        <sequence resource="EMBL-CDS" id="EAL24334"/>
    </conflict>
</comment>
<comment type="sequence caution" evidence="19">
    <conflict type="erroneous gene model prediction">
        <sequence resource="EMBL-CDS" id="EAL24335"/>
    </conflict>
</comment>
<keyword id="KW-0002">3D-structure</keyword>
<keyword id="KW-0009">Actin-binding</keyword>
<keyword id="KW-0025">Alternative splicing</keyword>
<keyword id="KW-0122">Cardiomyopathy</keyword>
<keyword id="KW-0175">Coiled coil</keyword>
<keyword id="KW-0963">Cytoplasm</keyword>
<keyword id="KW-0206">Cytoskeleton</keyword>
<keyword id="KW-0225">Disease variant</keyword>
<keyword id="KW-0597">Phosphoprotein</keyword>
<keyword id="KW-1267">Proteomics identification</keyword>
<keyword id="KW-1185">Reference proteome</keyword>